<name>RL7_RICTY</name>
<dbReference type="EMBL" id="AE017197">
    <property type="protein sequence ID" value="AAU03613.1"/>
    <property type="molecule type" value="Genomic_DNA"/>
</dbReference>
<dbReference type="RefSeq" id="WP_011190600.1">
    <property type="nucleotide sequence ID" value="NC_006142.1"/>
</dbReference>
<dbReference type="SMR" id="Q68XM9"/>
<dbReference type="KEGG" id="rty:RT0128"/>
<dbReference type="eggNOG" id="COG0222">
    <property type="taxonomic scope" value="Bacteria"/>
</dbReference>
<dbReference type="HOGENOM" id="CLU_086499_3_0_5"/>
<dbReference type="OrthoDB" id="9811748at2"/>
<dbReference type="Proteomes" id="UP000000604">
    <property type="component" value="Chromosome"/>
</dbReference>
<dbReference type="GO" id="GO:0005737">
    <property type="term" value="C:cytoplasm"/>
    <property type="evidence" value="ECO:0007669"/>
    <property type="project" value="UniProtKB-ARBA"/>
</dbReference>
<dbReference type="GO" id="GO:1990904">
    <property type="term" value="C:ribonucleoprotein complex"/>
    <property type="evidence" value="ECO:0007669"/>
    <property type="project" value="UniProtKB-KW"/>
</dbReference>
<dbReference type="GO" id="GO:0005840">
    <property type="term" value="C:ribosome"/>
    <property type="evidence" value="ECO:0007669"/>
    <property type="project" value="UniProtKB-KW"/>
</dbReference>
<dbReference type="GO" id="GO:0003729">
    <property type="term" value="F:mRNA binding"/>
    <property type="evidence" value="ECO:0007669"/>
    <property type="project" value="TreeGrafter"/>
</dbReference>
<dbReference type="GO" id="GO:0003735">
    <property type="term" value="F:structural constituent of ribosome"/>
    <property type="evidence" value="ECO:0007669"/>
    <property type="project" value="InterPro"/>
</dbReference>
<dbReference type="GO" id="GO:0006412">
    <property type="term" value="P:translation"/>
    <property type="evidence" value="ECO:0007669"/>
    <property type="project" value="UniProtKB-UniRule"/>
</dbReference>
<dbReference type="CDD" id="cd00387">
    <property type="entry name" value="Ribosomal_L7_L12"/>
    <property type="match status" value="1"/>
</dbReference>
<dbReference type="FunFam" id="3.30.1390.10:FF:000001">
    <property type="entry name" value="50S ribosomal protein L7/L12"/>
    <property type="match status" value="1"/>
</dbReference>
<dbReference type="Gene3D" id="3.30.1390.10">
    <property type="match status" value="1"/>
</dbReference>
<dbReference type="Gene3D" id="1.20.5.710">
    <property type="entry name" value="Single helix bin"/>
    <property type="match status" value="1"/>
</dbReference>
<dbReference type="HAMAP" id="MF_00368">
    <property type="entry name" value="Ribosomal_bL12"/>
    <property type="match status" value="1"/>
</dbReference>
<dbReference type="InterPro" id="IPR000206">
    <property type="entry name" value="Ribosomal_bL12"/>
</dbReference>
<dbReference type="InterPro" id="IPR013823">
    <property type="entry name" value="Ribosomal_bL12_C"/>
</dbReference>
<dbReference type="InterPro" id="IPR014719">
    <property type="entry name" value="Ribosomal_bL12_C/ClpS-like"/>
</dbReference>
<dbReference type="InterPro" id="IPR008932">
    <property type="entry name" value="Ribosomal_bL12_oligo"/>
</dbReference>
<dbReference type="InterPro" id="IPR036235">
    <property type="entry name" value="Ribosomal_bL12_oligo_N_sf"/>
</dbReference>
<dbReference type="NCBIfam" id="TIGR00855">
    <property type="entry name" value="L12"/>
    <property type="match status" value="1"/>
</dbReference>
<dbReference type="PANTHER" id="PTHR45987">
    <property type="entry name" value="39S RIBOSOMAL PROTEIN L12"/>
    <property type="match status" value="1"/>
</dbReference>
<dbReference type="PANTHER" id="PTHR45987:SF4">
    <property type="entry name" value="LARGE RIBOSOMAL SUBUNIT PROTEIN BL12M"/>
    <property type="match status" value="1"/>
</dbReference>
<dbReference type="Pfam" id="PF00542">
    <property type="entry name" value="Ribosomal_L12"/>
    <property type="match status" value="1"/>
</dbReference>
<dbReference type="Pfam" id="PF16320">
    <property type="entry name" value="Ribosomal_L12_N"/>
    <property type="match status" value="1"/>
</dbReference>
<dbReference type="SUPFAM" id="SSF54736">
    <property type="entry name" value="ClpS-like"/>
    <property type="match status" value="1"/>
</dbReference>
<dbReference type="SUPFAM" id="SSF48300">
    <property type="entry name" value="Ribosomal protein L7/12, oligomerisation (N-terminal) domain"/>
    <property type="match status" value="1"/>
</dbReference>
<sequence>MADLAKIEEQLSSLTLMQAAELVKILEAKWGVSAVTPIAVASAGVADPVAEAVAEKTEFEVVLTATGDKKVEVIKIIKDITGLGLIEAKKLVDEAPKPIKSNLKKAEAEEIKNKLEATGAKVELK</sequence>
<comment type="function">
    <text evidence="1">Forms part of the ribosomal stalk which helps the ribosome interact with GTP-bound translation factors. Is thus essential for accurate translation.</text>
</comment>
<comment type="subunit">
    <text evidence="1">Homodimer. Part of the ribosomal stalk of the 50S ribosomal subunit. Forms a multimeric L10(L12)X complex, where L10 forms an elongated spine to which 2 to 4 L12 dimers bind in a sequential fashion. Binds GTP-bound translation factors.</text>
</comment>
<comment type="similarity">
    <text evidence="1">Belongs to the bacterial ribosomal protein bL12 family.</text>
</comment>
<gene>
    <name evidence="1" type="primary">rplL</name>
    <name type="ordered locus">RT0128</name>
</gene>
<proteinExistence type="inferred from homology"/>
<accession>Q68XM9</accession>
<keyword id="KW-0687">Ribonucleoprotein</keyword>
<keyword id="KW-0689">Ribosomal protein</keyword>
<feature type="chain" id="PRO_0000243487" description="Large ribosomal subunit protein bL12">
    <location>
        <begin position="1"/>
        <end position="125"/>
    </location>
</feature>
<protein>
    <recommendedName>
        <fullName evidence="1">Large ribosomal subunit protein bL12</fullName>
    </recommendedName>
    <alternativeName>
        <fullName evidence="2">50S ribosomal protein L7/L12</fullName>
    </alternativeName>
</protein>
<reference key="1">
    <citation type="journal article" date="2004" name="J. Bacteriol.">
        <title>Complete genome sequence of Rickettsia typhi and comparison with sequences of other Rickettsiae.</title>
        <authorList>
            <person name="McLeod M.P."/>
            <person name="Qin X."/>
            <person name="Karpathy S.E."/>
            <person name="Gioia J."/>
            <person name="Highlander S.K."/>
            <person name="Fox G.E."/>
            <person name="McNeill T.Z."/>
            <person name="Jiang H."/>
            <person name="Muzny D."/>
            <person name="Jacob L.S."/>
            <person name="Hawes A.C."/>
            <person name="Sodergren E."/>
            <person name="Gill R."/>
            <person name="Hume J."/>
            <person name="Morgan M."/>
            <person name="Fan G."/>
            <person name="Amin A.G."/>
            <person name="Gibbs R.A."/>
            <person name="Hong C."/>
            <person name="Yu X.-J."/>
            <person name="Walker D.H."/>
            <person name="Weinstock G.M."/>
        </authorList>
    </citation>
    <scope>NUCLEOTIDE SEQUENCE [LARGE SCALE GENOMIC DNA]</scope>
    <source>
        <strain>ATCC VR-144 / Wilmington</strain>
    </source>
</reference>
<organism>
    <name type="scientific">Rickettsia typhi (strain ATCC VR-144 / Wilmington)</name>
    <dbReference type="NCBI Taxonomy" id="257363"/>
    <lineage>
        <taxon>Bacteria</taxon>
        <taxon>Pseudomonadati</taxon>
        <taxon>Pseudomonadota</taxon>
        <taxon>Alphaproteobacteria</taxon>
        <taxon>Rickettsiales</taxon>
        <taxon>Rickettsiaceae</taxon>
        <taxon>Rickettsieae</taxon>
        <taxon>Rickettsia</taxon>
        <taxon>typhus group</taxon>
    </lineage>
</organism>
<evidence type="ECO:0000255" key="1">
    <source>
        <dbReference type="HAMAP-Rule" id="MF_00368"/>
    </source>
</evidence>
<evidence type="ECO:0000305" key="2"/>